<name>SYL_BRASO</name>
<sequence>MTSERYNAREAEPRWQRQWDEKAIFATKNDDPRPKYYVLEMFPYPSGRIHIGHVRNYTLGDVLARFMRAKGFNVLHPMGWDAFGLPAENAAIERKVAPKAWTYDNIAAMKKQLRSIGLSLDWAREFATCDPSYYKHQQKMFLDFMQAGLVEREQRKVNWDPVDMTVLANEQVIDGRGWRSGAVVEQREMNQWVFKITKYSQELLDALDGLDRWPDKVRLMQRNWIGRSEGLLIRFALDPKTVPAGESELKIFTTRPDTLFGAKFMAISADHPLAQAAAAKNPELAAFIAEIKRIGTAQEAIDTAEKQGFDTGIRAVHPFDPSWTLPVYVANFVLMEYGTGAIFGCPAHDQRDLDFVNKYGLGNTPVVCPEGQDPASFVITDTAYDGDGRMINSRFLDGMTIAQAKDEVAKRLESEQRGGSPIGERQVNFRLRDWGISRQRYWGCPIPVIHCATCDVVPVPAGDLPVVLPDDVTFDKPGNALDHHPTWKHVTCPKCGGKATRETDTMDTFVDSSWYFARFTDPWNETAPTTPAVANRMMPVDQYIGGVEHAILHLLYSRFFTRAMKATGHVAMDEPFAGMFTQGMVVHETYQKADGTYVNPADVKIEVGGNGRRAVLTATGEDITIGPIEKMSKSKKNTVDPDDIIESYGADVARWFMLSDSPPDRDVIWSDERVQGAARFVQRLWRLVNESVAASAEAPSSRPANFSADALALRKAAHGALDKVTGGIERLHFNVCLAHIREFANALADVLAKPAKPAPDLAWATREAAGILVQLFSPMMPHLAEECWQVLGHSGLISEASWPQIERDLLVEDSMTLVVQVNGKKRGEVTVASNAQNPEIESAVLALDAVKVALDGKPVRKVIIVPKRIVNVVG</sequence>
<protein>
    <recommendedName>
        <fullName evidence="1">Leucine--tRNA ligase</fullName>
        <ecNumber evidence="1">6.1.1.4</ecNumber>
    </recommendedName>
    <alternativeName>
        <fullName evidence="1">Leucyl-tRNA synthetase</fullName>
        <shortName evidence="1">LeuRS</shortName>
    </alternativeName>
</protein>
<feature type="chain" id="PRO_1000009301" description="Leucine--tRNA ligase">
    <location>
        <begin position="1"/>
        <end position="874"/>
    </location>
</feature>
<feature type="short sequence motif" description="'HIGH' region">
    <location>
        <begin position="43"/>
        <end position="53"/>
    </location>
</feature>
<feature type="short sequence motif" description="'KMSKS' region">
    <location>
        <begin position="630"/>
        <end position="634"/>
    </location>
</feature>
<feature type="binding site" evidence="1">
    <location>
        <position position="633"/>
    </location>
    <ligand>
        <name>ATP</name>
        <dbReference type="ChEBI" id="CHEBI:30616"/>
    </ligand>
</feature>
<keyword id="KW-0030">Aminoacyl-tRNA synthetase</keyword>
<keyword id="KW-0067">ATP-binding</keyword>
<keyword id="KW-0963">Cytoplasm</keyword>
<keyword id="KW-0436">Ligase</keyword>
<keyword id="KW-0547">Nucleotide-binding</keyword>
<keyword id="KW-0648">Protein biosynthesis</keyword>
<keyword id="KW-1185">Reference proteome</keyword>
<reference key="1">
    <citation type="journal article" date="2007" name="Science">
        <title>Legumes symbioses: absence of nod genes in photosynthetic bradyrhizobia.</title>
        <authorList>
            <person name="Giraud E."/>
            <person name="Moulin L."/>
            <person name="Vallenet D."/>
            <person name="Barbe V."/>
            <person name="Cytryn E."/>
            <person name="Avarre J.-C."/>
            <person name="Jaubert M."/>
            <person name="Simon D."/>
            <person name="Cartieaux F."/>
            <person name="Prin Y."/>
            <person name="Bena G."/>
            <person name="Hannibal L."/>
            <person name="Fardoux J."/>
            <person name="Kojadinovic M."/>
            <person name="Vuillet L."/>
            <person name="Lajus A."/>
            <person name="Cruveiller S."/>
            <person name="Rouy Z."/>
            <person name="Mangenot S."/>
            <person name="Segurens B."/>
            <person name="Dossat C."/>
            <person name="Franck W.L."/>
            <person name="Chang W.-S."/>
            <person name="Saunders E."/>
            <person name="Bruce D."/>
            <person name="Richardson P."/>
            <person name="Normand P."/>
            <person name="Dreyfus B."/>
            <person name="Pignol D."/>
            <person name="Stacey G."/>
            <person name="Emerich D."/>
            <person name="Vermeglio A."/>
            <person name="Medigue C."/>
            <person name="Sadowsky M."/>
        </authorList>
    </citation>
    <scope>NUCLEOTIDE SEQUENCE [LARGE SCALE GENOMIC DNA]</scope>
    <source>
        <strain>ORS 278</strain>
    </source>
</reference>
<accession>A4YJS8</accession>
<comment type="catalytic activity">
    <reaction evidence="1">
        <text>tRNA(Leu) + L-leucine + ATP = L-leucyl-tRNA(Leu) + AMP + diphosphate</text>
        <dbReference type="Rhea" id="RHEA:11688"/>
        <dbReference type="Rhea" id="RHEA-COMP:9613"/>
        <dbReference type="Rhea" id="RHEA-COMP:9622"/>
        <dbReference type="ChEBI" id="CHEBI:30616"/>
        <dbReference type="ChEBI" id="CHEBI:33019"/>
        <dbReference type="ChEBI" id="CHEBI:57427"/>
        <dbReference type="ChEBI" id="CHEBI:78442"/>
        <dbReference type="ChEBI" id="CHEBI:78494"/>
        <dbReference type="ChEBI" id="CHEBI:456215"/>
        <dbReference type="EC" id="6.1.1.4"/>
    </reaction>
</comment>
<comment type="subcellular location">
    <subcellularLocation>
        <location evidence="1">Cytoplasm</location>
    </subcellularLocation>
</comment>
<comment type="similarity">
    <text evidence="1">Belongs to the class-I aminoacyl-tRNA synthetase family.</text>
</comment>
<dbReference type="EC" id="6.1.1.4" evidence="1"/>
<dbReference type="EMBL" id="CU234118">
    <property type="protein sequence ID" value="CAL74154.1"/>
    <property type="molecule type" value="Genomic_DNA"/>
</dbReference>
<dbReference type="RefSeq" id="WP_011923445.1">
    <property type="nucleotide sequence ID" value="NC_009445.1"/>
</dbReference>
<dbReference type="SMR" id="A4YJS8"/>
<dbReference type="STRING" id="114615.BRADO0189"/>
<dbReference type="KEGG" id="bra:BRADO0189"/>
<dbReference type="eggNOG" id="COG0495">
    <property type="taxonomic scope" value="Bacteria"/>
</dbReference>
<dbReference type="HOGENOM" id="CLU_004427_0_0_5"/>
<dbReference type="OrthoDB" id="9810365at2"/>
<dbReference type="Proteomes" id="UP000001994">
    <property type="component" value="Chromosome"/>
</dbReference>
<dbReference type="GO" id="GO:0005829">
    <property type="term" value="C:cytosol"/>
    <property type="evidence" value="ECO:0007669"/>
    <property type="project" value="TreeGrafter"/>
</dbReference>
<dbReference type="GO" id="GO:0002161">
    <property type="term" value="F:aminoacyl-tRNA deacylase activity"/>
    <property type="evidence" value="ECO:0007669"/>
    <property type="project" value="InterPro"/>
</dbReference>
<dbReference type="GO" id="GO:0005524">
    <property type="term" value="F:ATP binding"/>
    <property type="evidence" value="ECO:0007669"/>
    <property type="project" value="UniProtKB-UniRule"/>
</dbReference>
<dbReference type="GO" id="GO:0004823">
    <property type="term" value="F:leucine-tRNA ligase activity"/>
    <property type="evidence" value="ECO:0007669"/>
    <property type="project" value="UniProtKB-UniRule"/>
</dbReference>
<dbReference type="GO" id="GO:0006429">
    <property type="term" value="P:leucyl-tRNA aminoacylation"/>
    <property type="evidence" value="ECO:0007669"/>
    <property type="project" value="UniProtKB-UniRule"/>
</dbReference>
<dbReference type="CDD" id="cd07958">
    <property type="entry name" value="Anticodon_Ia_Leu_BEm"/>
    <property type="match status" value="1"/>
</dbReference>
<dbReference type="CDD" id="cd00812">
    <property type="entry name" value="LeuRS_core"/>
    <property type="match status" value="1"/>
</dbReference>
<dbReference type="FunFam" id="1.10.730.10:FF:000002">
    <property type="entry name" value="Leucine--tRNA ligase"/>
    <property type="match status" value="1"/>
</dbReference>
<dbReference type="FunFam" id="3.10.20.590:FF:000001">
    <property type="entry name" value="Leucine--tRNA ligase"/>
    <property type="match status" value="1"/>
</dbReference>
<dbReference type="FunFam" id="3.40.50.620:FF:000003">
    <property type="entry name" value="Leucine--tRNA ligase"/>
    <property type="match status" value="1"/>
</dbReference>
<dbReference type="Gene3D" id="2.20.28.290">
    <property type="match status" value="1"/>
</dbReference>
<dbReference type="Gene3D" id="3.10.20.590">
    <property type="match status" value="1"/>
</dbReference>
<dbReference type="Gene3D" id="3.40.50.620">
    <property type="entry name" value="HUPs"/>
    <property type="match status" value="2"/>
</dbReference>
<dbReference type="Gene3D" id="1.10.730.10">
    <property type="entry name" value="Isoleucyl-tRNA Synthetase, Domain 1"/>
    <property type="match status" value="1"/>
</dbReference>
<dbReference type="HAMAP" id="MF_00049_B">
    <property type="entry name" value="Leu_tRNA_synth_B"/>
    <property type="match status" value="1"/>
</dbReference>
<dbReference type="InterPro" id="IPR001412">
    <property type="entry name" value="aa-tRNA-synth_I_CS"/>
</dbReference>
<dbReference type="InterPro" id="IPR002300">
    <property type="entry name" value="aa-tRNA-synth_Ia"/>
</dbReference>
<dbReference type="InterPro" id="IPR002302">
    <property type="entry name" value="Leu-tRNA-ligase"/>
</dbReference>
<dbReference type="InterPro" id="IPR025709">
    <property type="entry name" value="Leu_tRNA-synth_edit"/>
</dbReference>
<dbReference type="InterPro" id="IPR013155">
    <property type="entry name" value="M/V/L/I-tRNA-synth_anticd-bd"/>
</dbReference>
<dbReference type="InterPro" id="IPR015413">
    <property type="entry name" value="Methionyl/Leucyl_tRNA_Synth"/>
</dbReference>
<dbReference type="InterPro" id="IPR014729">
    <property type="entry name" value="Rossmann-like_a/b/a_fold"/>
</dbReference>
<dbReference type="InterPro" id="IPR009080">
    <property type="entry name" value="tRNAsynth_Ia_anticodon-bd"/>
</dbReference>
<dbReference type="InterPro" id="IPR009008">
    <property type="entry name" value="Val/Leu/Ile-tRNA-synth_edit"/>
</dbReference>
<dbReference type="NCBIfam" id="TIGR00396">
    <property type="entry name" value="leuS_bact"/>
    <property type="match status" value="1"/>
</dbReference>
<dbReference type="PANTHER" id="PTHR43740:SF2">
    <property type="entry name" value="LEUCINE--TRNA LIGASE, MITOCHONDRIAL"/>
    <property type="match status" value="1"/>
</dbReference>
<dbReference type="PANTHER" id="PTHR43740">
    <property type="entry name" value="LEUCYL-TRNA SYNTHETASE"/>
    <property type="match status" value="1"/>
</dbReference>
<dbReference type="Pfam" id="PF08264">
    <property type="entry name" value="Anticodon_1"/>
    <property type="match status" value="1"/>
</dbReference>
<dbReference type="Pfam" id="PF00133">
    <property type="entry name" value="tRNA-synt_1"/>
    <property type="match status" value="2"/>
</dbReference>
<dbReference type="Pfam" id="PF13603">
    <property type="entry name" value="tRNA-synt_1_2"/>
    <property type="match status" value="1"/>
</dbReference>
<dbReference type="Pfam" id="PF09334">
    <property type="entry name" value="tRNA-synt_1g"/>
    <property type="match status" value="1"/>
</dbReference>
<dbReference type="PRINTS" id="PR00985">
    <property type="entry name" value="TRNASYNTHLEU"/>
</dbReference>
<dbReference type="SUPFAM" id="SSF47323">
    <property type="entry name" value="Anticodon-binding domain of a subclass of class I aminoacyl-tRNA synthetases"/>
    <property type="match status" value="1"/>
</dbReference>
<dbReference type="SUPFAM" id="SSF52374">
    <property type="entry name" value="Nucleotidylyl transferase"/>
    <property type="match status" value="1"/>
</dbReference>
<dbReference type="SUPFAM" id="SSF50677">
    <property type="entry name" value="ValRS/IleRS/LeuRS editing domain"/>
    <property type="match status" value="1"/>
</dbReference>
<dbReference type="PROSITE" id="PS00178">
    <property type="entry name" value="AA_TRNA_LIGASE_I"/>
    <property type="match status" value="1"/>
</dbReference>
<proteinExistence type="inferred from homology"/>
<gene>
    <name evidence="1" type="primary">leuS</name>
    <name type="ordered locus">BRADO0189</name>
</gene>
<evidence type="ECO:0000255" key="1">
    <source>
        <dbReference type="HAMAP-Rule" id="MF_00049"/>
    </source>
</evidence>
<organism>
    <name type="scientific">Bradyrhizobium sp. (strain ORS 278)</name>
    <dbReference type="NCBI Taxonomy" id="114615"/>
    <lineage>
        <taxon>Bacteria</taxon>
        <taxon>Pseudomonadati</taxon>
        <taxon>Pseudomonadota</taxon>
        <taxon>Alphaproteobacteria</taxon>
        <taxon>Hyphomicrobiales</taxon>
        <taxon>Nitrobacteraceae</taxon>
        <taxon>Bradyrhizobium</taxon>
    </lineage>
</organism>